<keyword id="KW-0687">Ribonucleoprotein</keyword>
<keyword id="KW-0689">Ribosomal protein</keyword>
<accession>A4G096</accession>
<reference key="1">
    <citation type="submission" date="2007-03" db="EMBL/GenBank/DDBJ databases">
        <title>Complete sequence of chromosome of Methanococcus maripaludis C5.</title>
        <authorList>
            <consortium name="US DOE Joint Genome Institute"/>
            <person name="Copeland A."/>
            <person name="Lucas S."/>
            <person name="Lapidus A."/>
            <person name="Barry K."/>
            <person name="Glavina del Rio T."/>
            <person name="Dalin E."/>
            <person name="Tice H."/>
            <person name="Pitluck S."/>
            <person name="Chertkov O."/>
            <person name="Brettin T."/>
            <person name="Bruce D."/>
            <person name="Han C."/>
            <person name="Detter J.C."/>
            <person name="Schmutz J."/>
            <person name="Larimer F."/>
            <person name="Land M."/>
            <person name="Hauser L."/>
            <person name="Kyrpides N."/>
            <person name="Mikhailova N."/>
            <person name="Sieprawska-Lupa M."/>
            <person name="Whitman W.B."/>
            <person name="Richardson P."/>
        </authorList>
    </citation>
    <scope>NUCLEOTIDE SEQUENCE [LARGE SCALE GENOMIC DNA]</scope>
    <source>
        <strain>C5 / ATCC BAA-1333</strain>
    </source>
</reference>
<dbReference type="EMBL" id="CP000609">
    <property type="protein sequence ID" value="ABO35880.1"/>
    <property type="molecule type" value="Genomic_DNA"/>
</dbReference>
<dbReference type="RefSeq" id="WP_011869327.1">
    <property type="nucleotide sequence ID" value="NC_009135.1"/>
</dbReference>
<dbReference type="SMR" id="A4G096"/>
<dbReference type="STRING" id="402880.MmarC5_1583"/>
<dbReference type="GeneID" id="4928488"/>
<dbReference type="KEGG" id="mmq:MmarC5_1583"/>
<dbReference type="eggNOG" id="arCOG04129">
    <property type="taxonomic scope" value="Archaea"/>
</dbReference>
<dbReference type="HOGENOM" id="CLU_103610_1_1_2"/>
<dbReference type="OrthoDB" id="6295at2157"/>
<dbReference type="Proteomes" id="UP000000253">
    <property type="component" value="Chromosome"/>
</dbReference>
<dbReference type="GO" id="GO:1990904">
    <property type="term" value="C:ribonucleoprotein complex"/>
    <property type="evidence" value="ECO:0007669"/>
    <property type="project" value="UniProtKB-KW"/>
</dbReference>
<dbReference type="GO" id="GO:0005840">
    <property type="term" value="C:ribosome"/>
    <property type="evidence" value="ECO:0007669"/>
    <property type="project" value="UniProtKB-KW"/>
</dbReference>
<dbReference type="GO" id="GO:0003735">
    <property type="term" value="F:structural constituent of ribosome"/>
    <property type="evidence" value="ECO:0007669"/>
    <property type="project" value="InterPro"/>
</dbReference>
<dbReference type="GO" id="GO:0006412">
    <property type="term" value="P:translation"/>
    <property type="evidence" value="ECO:0007669"/>
    <property type="project" value="UniProtKB-UniRule"/>
</dbReference>
<dbReference type="FunFam" id="2.30.30.70:FF:000001">
    <property type="entry name" value="60S ribosomal protein L21"/>
    <property type="match status" value="1"/>
</dbReference>
<dbReference type="Gene3D" id="2.30.30.70">
    <property type="entry name" value="Ribosomal protein L21"/>
    <property type="match status" value="1"/>
</dbReference>
<dbReference type="HAMAP" id="MF_00369">
    <property type="entry name" value="Ribosomal_eL21"/>
    <property type="match status" value="1"/>
</dbReference>
<dbReference type="InterPro" id="IPR001147">
    <property type="entry name" value="Ribosomal_eL21"/>
</dbReference>
<dbReference type="InterPro" id="IPR022856">
    <property type="entry name" value="Ribosomal_eL21_arc"/>
</dbReference>
<dbReference type="InterPro" id="IPR018259">
    <property type="entry name" value="Ribosomal_eL21_CS"/>
</dbReference>
<dbReference type="InterPro" id="IPR036948">
    <property type="entry name" value="Ribosomal_eL21_sf"/>
</dbReference>
<dbReference type="InterPro" id="IPR008991">
    <property type="entry name" value="Translation_prot_SH3-like_sf"/>
</dbReference>
<dbReference type="NCBIfam" id="NF003303">
    <property type="entry name" value="PRK04306.1"/>
    <property type="match status" value="1"/>
</dbReference>
<dbReference type="PANTHER" id="PTHR20981">
    <property type="entry name" value="60S RIBOSOMAL PROTEIN L21"/>
    <property type="match status" value="1"/>
</dbReference>
<dbReference type="Pfam" id="PF01157">
    <property type="entry name" value="Ribosomal_L21e"/>
    <property type="match status" value="1"/>
</dbReference>
<dbReference type="SUPFAM" id="SSF50104">
    <property type="entry name" value="Translation proteins SH3-like domain"/>
    <property type="match status" value="1"/>
</dbReference>
<dbReference type="PROSITE" id="PS01171">
    <property type="entry name" value="RIBOSOMAL_L21E"/>
    <property type="match status" value="1"/>
</dbReference>
<evidence type="ECO:0000255" key="1">
    <source>
        <dbReference type="HAMAP-Rule" id="MF_00369"/>
    </source>
</evidence>
<evidence type="ECO:0000256" key="2">
    <source>
        <dbReference type="SAM" id="MobiDB-lite"/>
    </source>
</evidence>
<evidence type="ECO:0000305" key="3"/>
<comment type="similarity">
    <text evidence="1">Belongs to the eukaryotic ribosomal protein eL21 family.</text>
</comment>
<gene>
    <name evidence="1" type="primary">rpl21e</name>
    <name type="ordered locus">MmarC5_1583</name>
</gene>
<feature type="chain" id="PRO_1000007121" description="Large ribosomal subunit protein eL21">
    <location>
        <begin position="1"/>
        <end position="97"/>
    </location>
</feature>
<feature type="region of interest" description="Disordered" evidence="2">
    <location>
        <begin position="1"/>
        <end position="26"/>
    </location>
</feature>
<feature type="compositionally biased region" description="Basic residues" evidence="2">
    <location>
        <begin position="9"/>
        <end position="21"/>
    </location>
</feature>
<organism>
    <name type="scientific">Methanococcus maripaludis (strain C5 / ATCC BAA-1333)</name>
    <dbReference type="NCBI Taxonomy" id="402880"/>
    <lineage>
        <taxon>Archaea</taxon>
        <taxon>Methanobacteriati</taxon>
        <taxon>Methanobacteriota</taxon>
        <taxon>Methanomada group</taxon>
        <taxon>Methanococci</taxon>
        <taxon>Methanococcales</taxon>
        <taxon>Methanococcaceae</taxon>
        <taxon>Methanococcus</taxon>
    </lineage>
</organism>
<sequence>MQKSEGFRSKTRYKLQKHPRQKGMAPLTRALKCYTEGDRVHVVLDPSVQKGMPHPKFHGKTGVIVAQRGRSFLVRVKDGGKYKDIIARPQHLRESKL</sequence>
<name>RL21_METM5</name>
<protein>
    <recommendedName>
        <fullName evidence="1">Large ribosomal subunit protein eL21</fullName>
    </recommendedName>
    <alternativeName>
        <fullName evidence="3">50S ribosomal protein L21e</fullName>
    </alternativeName>
</protein>
<proteinExistence type="inferred from homology"/>